<comment type="function">
    <text evidence="1">Catalyzes the reversible isomerization of glucose-6-phosphate to fructose-6-phosphate.</text>
</comment>
<comment type="catalytic activity">
    <reaction evidence="1">
        <text>alpha-D-glucose 6-phosphate = beta-D-fructose 6-phosphate</text>
        <dbReference type="Rhea" id="RHEA:11816"/>
        <dbReference type="ChEBI" id="CHEBI:57634"/>
        <dbReference type="ChEBI" id="CHEBI:58225"/>
        <dbReference type="EC" id="5.3.1.9"/>
    </reaction>
</comment>
<comment type="pathway">
    <text evidence="1">Carbohydrate biosynthesis; gluconeogenesis.</text>
</comment>
<comment type="pathway">
    <text evidence="1">Carbohydrate degradation; glycolysis; D-glyceraldehyde 3-phosphate and glycerone phosphate from D-glucose: step 2/4.</text>
</comment>
<comment type="subcellular location">
    <subcellularLocation>
        <location evidence="1">Cytoplasm</location>
    </subcellularLocation>
</comment>
<comment type="similarity">
    <text evidence="1">Belongs to the GPI family.</text>
</comment>
<protein>
    <recommendedName>
        <fullName evidence="1">Glucose-6-phosphate isomerase</fullName>
        <shortName evidence="1">GPI</shortName>
        <ecNumber evidence="1">5.3.1.9</ecNumber>
    </recommendedName>
    <alternativeName>
        <fullName evidence="1">Phosphoglucose isomerase</fullName>
        <shortName evidence="1">PGI</shortName>
    </alternativeName>
    <alternativeName>
        <fullName evidence="1">Phosphohexose isomerase</fullName>
        <shortName evidence="1">PHI</shortName>
    </alternativeName>
</protein>
<feature type="chain" id="PRO_1000060394" description="Glucose-6-phosphate isomerase">
    <location>
        <begin position="1"/>
        <end position="549"/>
    </location>
</feature>
<feature type="active site" description="Proton donor" evidence="1">
    <location>
        <position position="355"/>
    </location>
</feature>
<feature type="active site" evidence="1">
    <location>
        <position position="386"/>
    </location>
</feature>
<feature type="active site" evidence="1">
    <location>
        <position position="514"/>
    </location>
</feature>
<feature type="modified residue" description="N6-acetyllysine" evidence="1">
    <location>
        <position position="80"/>
    </location>
</feature>
<feature type="modified residue" description="N6-acetyllysine" evidence="1">
    <location>
        <position position="228"/>
    </location>
</feature>
<feature type="modified residue" description="N6-acetyllysine" evidence="1">
    <location>
        <position position="234"/>
    </location>
</feature>
<sequence>MKNINPTQTAAWQALQKHFDEMKDVTIADLFAKDGDRFSKFSATFGDQMLVDYSKNRITEETLAKLQDLAKECDLAGAIKSMFSGEKINRTENRAVLHVALRNRSNTPILVDGKDVMPEVNAVLEKMKTFSEAIISGEWKGYTGKAITDVVNIGIGGSDLGPYMVTEALRPYKNHLNMHFVSNVDGTHIAEVLKKVNPETTLFLVASKTFTTQETMTNAHSARDWFLKAAGDEKHVAKHFAALSTNAKAVGEFGIDTANMFEFWDWVGGRYSLWSAIGLSIVLSIGFDNFVELLSGAHAMDKHFSTTPAEKNLPVLLALIGIWYNNFFGAETEAILPYDQYMHRFAAYFQQGNMESNGKYVDRNGNVVDYQTGPIIWGEPGTNGQHAFYQLIHQGTKMVPCDFIAPAITHNPLSDHHQKLLSNFFAQTEALAFGKSREVVEQEYRDQGKDPATLDYVVPFKVFEGNRPTNSILLREITPFSLGALIALYEHKIFTQGVILNIFTFDQWGVELGKQLANRILPELKDDKEISSHDSSTNGLINRYKAWRG</sequence>
<evidence type="ECO:0000255" key="1">
    <source>
        <dbReference type="HAMAP-Rule" id="MF_00473"/>
    </source>
</evidence>
<name>G6PI_ECOHS</name>
<keyword id="KW-0007">Acetylation</keyword>
<keyword id="KW-0963">Cytoplasm</keyword>
<keyword id="KW-0312">Gluconeogenesis</keyword>
<keyword id="KW-0324">Glycolysis</keyword>
<keyword id="KW-0413">Isomerase</keyword>
<reference key="1">
    <citation type="journal article" date="2008" name="J. Bacteriol.">
        <title>The pangenome structure of Escherichia coli: comparative genomic analysis of E. coli commensal and pathogenic isolates.</title>
        <authorList>
            <person name="Rasko D.A."/>
            <person name="Rosovitz M.J."/>
            <person name="Myers G.S.A."/>
            <person name="Mongodin E.F."/>
            <person name="Fricke W.F."/>
            <person name="Gajer P."/>
            <person name="Crabtree J."/>
            <person name="Sebaihia M."/>
            <person name="Thomson N.R."/>
            <person name="Chaudhuri R."/>
            <person name="Henderson I.R."/>
            <person name="Sperandio V."/>
            <person name="Ravel J."/>
        </authorList>
    </citation>
    <scope>NUCLEOTIDE SEQUENCE [LARGE SCALE GENOMIC DNA]</scope>
    <source>
        <strain>HS</strain>
    </source>
</reference>
<dbReference type="EC" id="5.3.1.9" evidence="1"/>
<dbReference type="EMBL" id="CP000802">
    <property type="protein sequence ID" value="ABV08428.1"/>
    <property type="molecule type" value="Genomic_DNA"/>
</dbReference>
<dbReference type="RefSeq" id="WP_000790009.1">
    <property type="nucleotide sequence ID" value="NC_009800.1"/>
</dbReference>
<dbReference type="SMR" id="A8A7C4"/>
<dbReference type="GeneID" id="75204168"/>
<dbReference type="KEGG" id="ecx:EcHS_A4264"/>
<dbReference type="HOGENOM" id="CLU_017947_3_1_6"/>
<dbReference type="UniPathway" id="UPA00109">
    <property type="reaction ID" value="UER00181"/>
</dbReference>
<dbReference type="UniPathway" id="UPA00138"/>
<dbReference type="GO" id="GO:0005829">
    <property type="term" value="C:cytosol"/>
    <property type="evidence" value="ECO:0007669"/>
    <property type="project" value="TreeGrafter"/>
</dbReference>
<dbReference type="GO" id="GO:0097367">
    <property type="term" value="F:carbohydrate derivative binding"/>
    <property type="evidence" value="ECO:0007669"/>
    <property type="project" value="InterPro"/>
</dbReference>
<dbReference type="GO" id="GO:0004347">
    <property type="term" value="F:glucose-6-phosphate isomerase activity"/>
    <property type="evidence" value="ECO:0007669"/>
    <property type="project" value="UniProtKB-UniRule"/>
</dbReference>
<dbReference type="GO" id="GO:0048029">
    <property type="term" value="F:monosaccharide binding"/>
    <property type="evidence" value="ECO:0007669"/>
    <property type="project" value="TreeGrafter"/>
</dbReference>
<dbReference type="GO" id="GO:0006094">
    <property type="term" value="P:gluconeogenesis"/>
    <property type="evidence" value="ECO:0007669"/>
    <property type="project" value="UniProtKB-UniRule"/>
</dbReference>
<dbReference type="GO" id="GO:0051156">
    <property type="term" value="P:glucose 6-phosphate metabolic process"/>
    <property type="evidence" value="ECO:0007669"/>
    <property type="project" value="TreeGrafter"/>
</dbReference>
<dbReference type="GO" id="GO:0006096">
    <property type="term" value="P:glycolytic process"/>
    <property type="evidence" value="ECO:0007669"/>
    <property type="project" value="UniProtKB-UniRule"/>
</dbReference>
<dbReference type="CDD" id="cd05015">
    <property type="entry name" value="SIS_PGI_1"/>
    <property type="match status" value="1"/>
</dbReference>
<dbReference type="CDD" id="cd05016">
    <property type="entry name" value="SIS_PGI_2"/>
    <property type="match status" value="1"/>
</dbReference>
<dbReference type="FunFam" id="1.10.1390.10:FF:000001">
    <property type="entry name" value="Glucose-6-phosphate isomerase"/>
    <property type="match status" value="1"/>
</dbReference>
<dbReference type="FunFam" id="3.40.50.10490:FF:000004">
    <property type="entry name" value="Glucose-6-phosphate isomerase"/>
    <property type="match status" value="1"/>
</dbReference>
<dbReference type="Gene3D" id="1.10.1390.10">
    <property type="match status" value="1"/>
</dbReference>
<dbReference type="Gene3D" id="3.40.50.10490">
    <property type="entry name" value="Glucose-6-phosphate isomerase like protein, domain 1"/>
    <property type="match status" value="2"/>
</dbReference>
<dbReference type="HAMAP" id="MF_00473">
    <property type="entry name" value="G6P_isomerase"/>
    <property type="match status" value="1"/>
</dbReference>
<dbReference type="InterPro" id="IPR001672">
    <property type="entry name" value="G6P_Isomerase"/>
</dbReference>
<dbReference type="InterPro" id="IPR023096">
    <property type="entry name" value="G6P_Isomerase_C"/>
</dbReference>
<dbReference type="InterPro" id="IPR018189">
    <property type="entry name" value="Phosphoglucose_isomerase_CS"/>
</dbReference>
<dbReference type="InterPro" id="IPR046348">
    <property type="entry name" value="SIS_dom_sf"/>
</dbReference>
<dbReference type="InterPro" id="IPR035476">
    <property type="entry name" value="SIS_PGI_1"/>
</dbReference>
<dbReference type="InterPro" id="IPR035482">
    <property type="entry name" value="SIS_PGI_2"/>
</dbReference>
<dbReference type="NCBIfam" id="NF001211">
    <property type="entry name" value="PRK00179.1"/>
    <property type="match status" value="1"/>
</dbReference>
<dbReference type="PANTHER" id="PTHR11469">
    <property type="entry name" value="GLUCOSE-6-PHOSPHATE ISOMERASE"/>
    <property type="match status" value="1"/>
</dbReference>
<dbReference type="PANTHER" id="PTHR11469:SF1">
    <property type="entry name" value="GLUCOSE-6-PHOSPHATE ISOMERASE"/>
    <property type="match status" value="1"/>
</dbReference>
<dbReference type="Pfam" id="PF00342">
    <property type="entry name" value="PGI"/>
    <property type="match status" value="1"/>
</dbReference>
<dbReference type="PRINTS" id="PR00662">
    <property type="entry name" value="G6PISOMERASE"/>
</dbReference>
<dbReference type="SUPFAM" id="SSF53697">
    <property type="entry name" value="SIS domain"/>
    <property type="match status" value="1"/>
</dbReference>
<dbReference type="PROSITE" id="PS00765">
    <property type="entry name" value="P_GLUCOSE_ISOMERASE_1"/>
    <property type="match status" value="1"/>
</dbReference>
<dbReference type="PROSITE" id="PS00174">
    <property type="entry name" value="P_GLUCOSE_ISOMERASE_2"/>
    <property type="match status" value="1"/>
</dbReference>
<dbReference type="PROSITE" id="PS51463">
    <property type="entry name" value="P_GLUCOSE_ISOMERASE_3"/>
    <property type="match status" value="1"/>
</dbReference>
<accession>A8A7C4</accession>
<gene>
    <name evidence="1" type="primary">pgi</name>
    <name type="ordered locus">EcHS_A4264</name>
</gene>
<organism>
    <name type="scientific">Escherichia coli O9:H4 (strain HS)</name>
    <dbReference type="NCBI Taxonomy" id="331112"/>
    <lineage>
        <taxon>Bacteria</taxon>
        <taxon>Pseudomonadati</taxon>
        <taxon>Pseudomonadota</taxon>
        <taxon>Gammaproteobacteria</taxon>
        <taxon>Enterobacterales</taxon>
        <taxon>Enterobacteriaceae</taxon>
        <taxon>Escherichia</taxon>
    </lineage>
</organism>
<proteinExistence type="inferred from homology"/>